<accession>Q04RU2</accession>
<dbReference type="EMBL" id="CP000350">
    <property type="protein sequence ID" value="ABJ76378.1"/>
    <property type="molecule type" value="Genomic_DNA"/>
</dbReference>
<dbReference type="RefSeq" id="WP_011670120.1">
    <property type="nucleotide sequence ID" value="NC_008510.1"/>
</dbReference>
<dbReference type="SMR" id="Q04RU2"/>
<dbReference type="KEGG" id="lbj:LBJ_1857"/>
<dbReference type="HOGENOM" id="CLU_064548_3_0_12"/>
<dbReference type="Proteomes" id="UP000000656">
    <property type="component" value="Chromosome 1"/>
</dbReference>
<dbReference type="GO" id="GO:1990904">
    <property type="term" value="C:ribonucleoprotein complex"/>
    <property type="evidence" value="ECO:0007669"/>
    <property type="project" value="UniProtKB-KW"/>
</dbReference>
<dbReference type="GO" id="GO:0005840">
    <property type="term" value="C:ribosome"/>
    <property type="evidence" value="ECO:0007669"/>
    <property type="project" value="UniProtKB-KW"/>
</dbReference>
<dbReference type="GO" id="GO:0003735">
    <property type="term" value="F:structural constituent of ribosome"/>
    <property type="evidence" value="ECO:0007669"/>
    <property type="project" value="InterPro"/>
</dbReference>
<dbReference type="GO" id="GO:0006412">
    <property type="term" value="P:translation"/>
    <property type="evidence" value="ECO:0007669"/>
    <property type="project" value="UniProtKB-UniRule"/>
</dbReference>
<dbReference type="FunFam" id="2.30.170.40:FF:000007">
    <property type="entry name" value="50S ribosomal protein L28"/>
    <property type="match status" value="1"/>
</dbReference>
<dbReference type="Gene3D" id="2.30.170.40">
    <property type="entry name" value="Ribosomal protein L28/L24"/>
    <property type="match status" value="1"/>
</dbReference>
<dbReference type="HAMAP" id="MF_00373">
    <property type="entry name" value="Ribosomal_bL28"/>
    <property type="match status" value="1"/>
</dbReference>
<dbReference type="InterPro" id="IPR026569">
    <property type="entry name" value="Ribosomal_bL28"/>
</dbReference>
<dbReference type="InterPro" id="IPR034704">
    <property type="entry name" value="Ribosomal_bL28/bL31-like_sf"/>
</dbReference>
<dbReference type="InterPro" id="IPR001383">
    <property type="entry name" value="Ribosomal_bL28_bact-type"/>
</dbReference>
<dbReference type="InterPro" id="IPR037147">
    <property type="entry name" value="Ribosomal_bL28_sf"/>
</dbReference>
<dbReference type="NCBIfam" id="TIGR00009">
    <property type="entry name" value="L28"/>
    <property type="match status" value="1"/>
</dbReference>
<dbReference type="PANTHER" id="PTHR13528">
    <property type="entry name" value="39S RIBOSOMAL PROTEIN L28, MITOCHONDRIAL"/>
    <property type="match status" value="1"/>
</dbReference>
<dbReference type="PANTHER" id="PTHR13528:SF2">
    <property type="entry name" value="LARGE RIBOSOMAL SUBUNIT PROTEIN BL28M"/>
    <property type="match status" value="1"/>
</dbReference>
<dbReference type="Pfam" id="PF00830">
    <property type="entry name" value="Ribosomal_L28"/>
    <property type="match status" value="1"/>
</dbReference>
<dbReference type="SUPFAM" id="SSF143800">
    <property type="entry name" value="L28p-like"/>
    <property type="match status" value="1"/>
</dbReference>
<evidence type="ECO:0000255" key="1">
    <source>
        <dbReference type="HAMAP-Rule" id="MF_00373"/>
    </source>
</evidence>
<evidence type="ECO:0000256" key="2">
    <source>
        <dbReference type="SAM" id="MobiDB-lite"/>
    </source>
</evidence>
<evidence type="ECO:0000305" key="3"/>
<feature type="chain" id="PRO_1000007269" description="Large ribosomal subunit protein bL28">
    <location>
        <begin position="1"/>
        <end position="94"/>
    </location>
</feature>
<feature type="region of interest" description="Disordered" evidence="2">
    <location>
        <begin position="1"/>
        <end position="21"/>
    </location>
</feature>
<feature type="compositionally biased region" description="Polar residues" evidence="2">
    <location>
        <begin position="11"/>
        <end position="20"/>
    </location>
</feature>
<gene>
    <name evidence="1" type="primary">rpmB</name>
    <name type="ordered locus">LBJ_1857</name>
</gene>
<keyword id="KW-0687">Ribonucleoprotein</keyword>
<keyword id="KW-0689">Ribosomal protein</keyword>
<sequence>MARRCEVTGRGTVSGNNVSHSHIKTRRTWKVNLIKKRIFLEDENRWVTIRLSTRALRTLRKKGIKAAIKDNGGSLGVLAPKKYAGITKQALKKA</sequence>
<organism>
    <name type="scientific">Leptospira borgpetersenii serovar Hardjo-bovis (strain JB197)</name>
    <dbReference type="NCBI Taxonomy" id="355277"/>
    <lineage>
        <taxon>Bacteria</taxon>
        <taxon>Pseudomonadati</taxon>
        <taxon>Spirochaetota</taxon>
        <taxon>Spirochaetia</taxon>
        <taxon>Leptospirales</taxon>
        <taxon>Leptospiraceae</taxon>
        <taxon>Leptospira</taxon>
    </lineage>
</organism>
<comment type="similarity">
    <text evidence="1">Belongs to the bacterial ribosomal protein bL28 family.</text>
</comment>
<proteinExistence type="inferred from homology"/>
<protein>
    <recommendedName>
        <fullName evidence="1">Large ribosomal subunit protein bL28</fullName>
    </recommendedName>
    <alternativeName>
        <fullName evidence="3">50S ribosomal protein L28</fullName>
    </alternativeName>
</protein>
<reference key="1">
    <citation type="journal article" date="2006" name="Proc. Natl. Acad. Sci. U.S.A.">
        <title>Genome reduction in Leptospira borgpetersenii reflects limited transmission potential.</title>
        <authorList>
            <person name="Bulach D.M."/>
            <person name="Zuerner R.L."/>
            <person name="Wilson P."/>
            <person name="Seemann T."/>
            <person name="McGrath A."/>
            <person name="Cullen P.A."/>
            <person name="Davis J."/>
            <person name="Johnson M."/>
            <person name="Kuczek E."/>
            <person name="Alt D.P."/>
            <person name="Peterson-Burch B."/>
            <person name="Coppel R.L."/>
            <person name="Rood J.I."/>
            <person name="Davies J.K."/>
            <person name="Adler B."/>
        </authorList>
    </citation>
    <scope>NUCLEOTIDE SEQUENCE [LARGE SCALE GENOMIC DNA]</scope>
    <source>
        <strain>JB197</strain>
    </source>
</reference>
<name>RL28_LEPBJ</name>